<gene>
    <name evidence="1" type="primary">pdxS</name>
    <name type="synonym">yaaD</name>
    <name type="ordered locus">BSU00110</name>
</gene>
<proteinExistence type="evidence at protein level"/>
<reference key="1">
    <citation type="journal article" date="1994" name="DNA Res.">
        <title>Systematic sequencing of the 180 kilobase region of the Bacillus subtilis chromosome containing the replication origin.</title>
        <authorList>
            <person name="Ogasawara N."/>
            <person name="Nakai S."/>
            <person name="Yoshikawa H."/>
        </authorList>
    </citation>
    <scope>NUCLEOTIDE SEQUENCE [GENOMIC DNA]</scope>
    <source>
        <strain>168</strain>
    </source>
</reference>
<reference key="2">
    <citation type="journal article" date="1997" name="Nature">
        <title>The complete genome sequence of the Gram-positive bacterium Bacillus subtilis.</title>
        <authorList>
            <person name="Kunst F."/>
            <person name="Ogasawara N."/>
            <person name="Moszer I."/>
            <person name="Albertini A.M."/>
            <person name="Alloni G."/>
            <person name="Azevedo V."/>
            <person name="Bertero M.G."/>
            <person name="Bessieres P."/>
            <person name="Bolotin A."/>
            <person name="Borchert S."/>
            <person name="Borriss R."/>
            <person name="Boursier L."/>
            <person name="Brans A."/>
            <person name="Braun M."/>
            <person name="Brignell S.C."/>
            <person name="Bron S."/>
            <person name="Brouillet S."/>
            <person name="Bruschi C.V."/>
            <person name="Caldwell B."/>
            <person name="Capuano V."/>
            <person name="Carter N.M."/>
            <person name="Choi S.-K."/>
            <person name="Codani J.-J."/>
            <person name="Connerton I.F."/>
            <person name="Cummings N.J."/>
            <person name="Daniel R.A."/>
            <person name="Denizot F."/>
            <person name="Devine K.M."/>
            <person name="Duesterhoeft A."/>
            <person name="Ehrlich S.D."/>
            <person name="Emmerson P.T."/>
            <person name="Entian K.-D."/>
            <person name="Errington J."/>
            <person name="Fabret C."/>
            <person name="Ferrari E."/>
            <person name="Foulger D."/>
            <person name="Fritz C."/>
            <person name="Fujita M."/>
            <person name="Fujita Y."/>
            <person name="Fuma S."/>
            <person name="Galizzi A."/>
            <person name="Galleron N."/>
            <person name="Ghim S.-Y."/>
            <person name="Glaser P."/>
            <person name="Goffeau A."/>
            <person name="Golightly E.J."/>
            <person name="Grandi G."/>
            <person name="Guiseppi G."/>
            <person name="Guy B.J."/>
            <person name="Haga K."/>
            <person name="Haiech J."/>
            <person name="Harwood C.R."/>
            <person name="Henaut A."/>
            <person name="Hilbert H."/>
            <person name="Holsappel S."/>
            <person name="Hosono S."/>
            <person name="Hullo M.-F."/>
            <person name="Itaya M."/>
            <person name="Jones L.-M."/>
            <person name="Joris B."/>
            <person name="Karamata D."/>
            <person name="Kasahara Y."/>
            <person name="Klaerr-Blanchard M."/>
            <person name="Klein C."/>
            <person name="Kobayashi Y."/>
            <person name="Koetter P."/>
            <person name="Koningstein G."/>
            <person name="Krogh S."/>
            <person name="Kumano M."/>
            <person name="Kurita K."/>
            <person name="Lapidus A."/>
            <person name="Lardinois S."/>
            <person name="Lauber J."/>
            <person name="Lazarevic V."/>
            <person name="Lee S.-M."/>
            <person name="Levine A."/>
            <person name="Liu H."/>
            <person name="Masuda S."/>
            <person name="Mauel C."/>
            <person name="Medigue C."/>
            <person name="Medina N."/>
            <person name="Mellado R.P."/>
            <person name="Mizuno M."/>
            <person name="Moestl D."/>
            <person name="Nakai S."/>
            <person name="Noback M."/>
            <person name="Noone D."/>
            <person name="O'Reilly M."/>
            <person name="Ogawa K."/>
            <person name="Ogiwara A."/>
            <person name="Oudega B."/>
            <person name="Park S.-H."/>
            <person name="Parro V."/>
            <person name="Pohl T.M."/>
            <person name="Portetelle D."/>
            <person name="Porwollik S."/>
            <person name="Prescott A.M."/>
            <person name="Presecan E."/>
            <person name="Pujic P."/>
            <person name="Purnelle B."/>
            <person name="Rapoport G."/>
            <person name="Rey M."/>
            <person name="Reynolds S."/>
            <person name="Rieger M."/>
            <person name="Rivolta C."/>
            <person name="Rocha E."/>
            <person name="Roche B."/>
            <person name="Rose M."/>
            <person name="Sadaie Y."/>
            <person name="Sato T."/>
            <person name="Scanlan E."/>
            <person name="Schleich S."/>
            <person name="Schroeter R."/>
            <person name="Scoffone F."/>
            <person name="Sekiguchi J."/>
            <person name="Sekowska A."/>
            <person name="Seror S.J."/>
            <person name="Serror P."/>
            <person name="Shin B.-S."/>
            <person name="Soldo B."/>
            <person name="Sorokin A."/>
            <person name="Tacconi E."/>
            <person name="Takagi T."/>
            <person name="Takahashi H."/>
            <person name="Takemaru K."/>
            <person name="Takeuchi M."/>
            <person name="Tamakoshi A."/>
            <person name="Tanaka T."/>
            <person name="Terpstra P."/>
            <person name="Tognoni A."/>
            <person name="Tosato V."/>
            <person name="Uchiyama S."/>
            <person name="Vandenbol M."/>
            <person name="Vannier F."/>
            <person name="Vassarotti A."/>
            <person name="Viari A."/>
            <person name="Wambutt R."/>
            <person name="Wedler E."/>
            <person name="Wedler H."/>
            <person name="Weitzenegger T."/>
            <person name="Winters P."/>
            <person name="Wipat A."/>
            <person name="Yamamoto H."/>
            <person name="Yamane K."/>
            <person name="Yasumoto K."/>
            <person name="Yata K."/>
            <person name="Yoshida K."/>
            <person name="Yoshikawa H.-F."/>
            <person name="Zumstein E."/>
            <person name="Yoshikawa H."/>
            <person name="Danchin A."/>
        </authorList>
    </citation>
    <scope>NUCLEOTIDE SEQUENCE [LARGE SCALE GENOMIC DNA]</scope>
    <source>
        <strain>168</strain>
    </source>
</reference>
<reference key="3">
    <citation type="journal article" date="1992" name="Mol. Microbiol.">
        <title>Amino acid sequences of several Bacillus subtilis proteins modified by apparent guanylylation.</title>
        <authorList>
            <person name="Mitchell C."/>
            <person name="Morris P.W."/>
            <person name="Vary J.C."/>
        </authorList>
    </citation>
    <scope>PROTEIN SEQUENCE OF 2-16</scope>
    <source>
        <strain>168 / DB100</strain>
    </source>
</reference>
<reference key="4">
    <citation type="journal article" date="1997" name="Electrophoresis">
        <title>First steps from a two-dimensional protein index towards a response-regulation map for Bacillus subtilis.</title>
        <authorList>
            <person name="Antelmann H."/>
            <person name="Bernhardt J."/>
            <person name="Schmid R."/>
            <person name="Mach H."/>
            <person name="Voelker U."/>
            <person name="Hecker M."/>
        </authorList>
    </citation>
    <scope>PROTEIN SEQUENCE OF 2-32</scope>
    <source>
        <strain>168 / IS58</strain>
    </source>
</reference>
<reference key="5">
    <citation type="journal article" date="2004" name="J. Bacteriol.">
        <title>Physical and enzymological interaction of Bacillus subtilis proteins required for de novo pyridoxal 5'-phosphate biosynthesis.</title>
        <authorList>
            <person name="Belitsky B.R."/>
        </authorList>
    </citation>
    <scope>CHARACTERIZATION</scope>
    <source>
        <strain>168 / SMY</strain>
    </source>
</reference>
<reference key="6">
    <citation type="journal article" date="2005" name="J. Am. Chem. Soc.">
        <title>Reconstitution and biochemical characterization of a new pyridoxal-5'-phosphate biosynthetic pathway.</title>
        <authorList>
            <person name="Burns K.E."/>
            <person name="Xiang Y."/>
            <person name="Kinsland C.L."/>
            <person name="McLafferty F.W."/>
            <person name="Begley T.P."/>
        </authorList>
    </citation>
    <scope>MUTAGENESIS OF LYS-149</scope>
    <scope>IDENTIFICATION OF REACTION SUBSTRATES</scope>
    <scope>PH DEPENDENCE</scope>
</reference>
<reference key="7">
    <citation type="journal article" date="2005" name="J. Biol. Chem.">
        <title>On the two components of pyridoxal 5'-phosphate synthase from Bacillus subtilis.</title>
        <authorList>
            <person name="Raschle T."/>
            <person name="Amrhein N."/>
            <person name="Fitzpatrick T.B."/>
        </authorList>
    </citation>
    <scope>FUNCTION</scope>
    <scope>CATALYTIC ACTIVITY</scope>
    <scope>BIOPHYSICOCHEMICAL PROPERTIES</scope>
    <scope>IDENTIFICATION OF REACTION PRODUCT</scope>
    <source>
        <strain>168</strain>
    </source>
</reference>
<reference key="8">
    <citation type="journal article" date="2007" name="Biochemistry">
        <title>Thermodynamic characterization of the protein-protein interaction in the heteromeric Bacillus subtilis pyridoxalphosphate synthase.</title>
        <authorList>
            <person name="Neuwirth M."/>
            <person name="Flicker K."/>
            <person name="Strohmeier M."/>
            <person name="Tews I."/>
            <person name="Macheroux P."/>
        </authorList>
    </citation>
    <scope>COMPLEX FORMATION OF PDXS AND PDXT</scope>
</reference>
<reference key="9">
    <citation type="journal article" date="2007" name="J. Biol. Chem.">
        <title>Reaction mechanism of pyridoxal 5'-phosphate synthase. Detection of an enzyme-bound chromophoric intermediate.</title>
        <authorList>
            <person name="Raschle T."/>
            <person name="Arigoni D."/>
            <person name="Brunisholz R."/>
            <person name="Rechsteiner H."/>
            <person name="Amrhein N."/>
            <person name="Fitzpatrick T.B."/>
        </authorList>
    </citation>
    <scope>CATALYTIC ACTIVITY</scope>
    <scope>MUTAGENESIS OF LYS-81 AND LYS-149</scope>
    <scope>ACTIVE SITE</scope>
    <scope>REACTION MECHANISM</scope>
    <scope>BIOPHYSICOCHEMICAL PROPERTIES</scope>
    <source>
        <strain>168</strain>
    </source>
</reference>
<reference key="10">
    <citation type="journal article" date="2008" name="Angew. Chem. Int. Ed. Engl.">
        <title>Trapping of a chromophoric intermediate in the Pdx1-catalyzed biosynthesis of pyridoxal 5'-phosphate.</title>
        <authorList>
            <person name="Hanes J.W."/>
            <person name="Keresztes I."/>
            <person name="Begley T.P."/>
        </authorList>
    </citation>
    <scope>CATALYTIC ACTIVITY</scope>
    <scope>IDENTIFICATION OF REACTION INTERMEDIATE</scope>
    <scope>REACTION MECHANISM</scope>
</reference>
<reference key="11">
    <citation type="journal article" date="2008" name="J. Am. Chem. Soc.">
        <title>Mechanistic studies on pyridoxal phosphate synthase: the reaction pathway leading to a chromophoric intermediate.</title>
        <authorList>
            <person name="Hanes J.W."/>
            <person name="Burns K.E."/>
            <person name="Hilmey D.G."/>
            <person name="Chatterjee A."/>
            <person name="Dorrestein P.C."/>
            <person name="Begley T.P."/>
        </authorList>
    </citation>
    <scope>FUNCTION</scope>
    <scope>CATALYTIC ACTIVITY</scope>
    <scope>IDENTIFICATION OF GLYCERALDEHAYDE-3-PHOSPHATE AS SUBSTRATE</scope>
    <scope>CHARACTERIZATION OF REACTION INTERMEDIATE</scope>
    <scope>REACTION MECHANISM</scope>
    <source>
        <strain>168</strain>
    </source>
</reference>
<reference key="12">
    <citation type="journal article" date="2008" name="Nat. Chem. Biol.">
        <title>13C NMR snapshots of the complex reaction coordinate of pyridoxal phosphate synthase.</title>
        <authorList>
            <person name="Hanes J.W."/>
            <person name="Keresztes I."/>
            <person name="Begley T.P."/>
        </authorList>
    </citation>
    <scope>CATALYTIC ACTIVITY</scope>
    <scope>CHARACTERIZATION OF REACTION INTERMEDIATES</scope>
    <scope>REACTION MECHANISM</scope>
</reference>
<reference key="13">
    <citation type="journal article" date="2009" name="Biochemistry">
        <title>Dissection of contributions from invariant amino acids to complex formation and catalysis in the heteromeric pyridoxal 5-phosphate synthase complex from Bacillus subtilis.</title>
        <authorList>
            <person name="Wallner S."/>
            <person name="Neuwirth M."/>
            <person name="Flicker K."/>
            <person name="Tews I."/>
            <person name="Macheroux P."/>
        </authorList>
    </citation>
    <scope>MUTAGENESIS OF LYS-18; SER-75 AND ASP-99</scope>
</reference>
<reference key="14">
    <citation type="journal article" date="2009" name="J. Biol. Chem.">
        <title>Intersubunit cross-talk in pyridoxal 5'-phosphate synthase, coordinated by the C terminus of the synthase subunit.</title>
        <authorList>
            <person name="Raschle T."/>
            <person name="Speziga D."/>
            <person name="Kress W."/>
            <person name="Moccand C."/>
            <person name="Gehrig P."/>
            <person name="Amrhein N."/>
            <person name="Weber-Ban E."/>
            <person name="Fitzpatrick T.B."/>
        </authorList>
    </citation>
    <scope>FLUORESCENCE SPECTROSCOPY</scope>
    <scope>CROSS LINKING</scope>
</reference>
<reference key="15">
    <citation type="journal article" date="2006" name="Proc. Natl. Acad. Sci. U.S.A.">
        <title>Structure of a bacterial pyridoxal 5'-phosphate synthase complex.</title>
        <authorList>
            <person name="Strohmeier M."/>
            <person name="Raschle T."/>
            <person name="Mazurkiewicz J."/>
            <person name="Rippe K."/>
            <person name="Sinning I."/>
            <person name="Fitzpatrick T.B."/>
            <person name="Tews I."/>
        </authorList>
    </citation>
    <scope>X-RAY CRYSTALLOGRAPHY (2.08 ANGSTROMS) OF APOENZYME AND COMPLEX WITH SUBUNIT PDXS</scope>
    <scope>SUBUNIT</scope>
</reference>
<comment type="function">
    <text evidence="1 4 8">Catalyzes the formation of pyridoxal 5'-phosphate from ribose 5-phosphate (RBP), glyceraldehyde 3-phosphate (G3P) and ammonia. The ammonia is provided by the PdxT subunit. Can also use ribulose 5-phosphate and dihydroxyacetone phosphate as substrates, resulting from enzyme-catalyzed isomerization of RBP and G3P, respectively.</text>
</comment>
<comment type="catalytic activity">
    <reaction evidence="1 4 6 7 8 9">
        <text>aldehydo-D-ribose 5-phosphate + D-glyceraldehyde 3-phosphate + L-glutamine = pyridoxal 5'-phosphate + L-glutamate + phosphate + 3 H2O + H(+)</text>
        <dbReference type="Rhea" id="RHEA:31507"/>
        <dbReference type="ChEBI" id="CHEBI:15377"/>
        <dbReference type="ChEBI" id="CHEBI:15378"/>
        <dbReference type="ChEBI" id="CHEBI:29985"/>
        <dbReference type="ChEBI" id="CHEBI:43474"/>
        <dbReference type="ChEBI" id="CHEBI:58273"/>
        <dbReference type="ChEBI" id="CHEBI:58359"/>
        <dbReference type="ChEBI" id="CHEBI:59776"/>
        <dbReference type="ChEBI" id="CHEBI:597326"/>
        <dbReference type="EC" id="4.3.3.6"/>
    </reaction>
</comment>
<comment type="biophysicochemical properties">
    <kinetics>
        <KM evidence="4">68 uM for ribose-5-phosphate</KM>
        <KM evidence="6">53 uM for ribose-5-phosphate</KM>
        <KM evidence="6">3.18 mM for ribulose-5-phosphate</KM>
        <KM evidence="4">77 uM for D-glyceraldehyde-3-phosphate</KM>
        <text evidence="6">kcat is 0.040 min(-1) with ribose-5-phosphate as substrate. kcat is 0.042 min(-1) with ribulose-5-phosphate as substrate.</text>
    </kinetics>
    <phDependence>
        <text evidence="3">Optimum pH is 6-6.5.</text>
    </phDependence>
</comment>
<comment type="pathway">
    <text evidence="1">Cofactor biosynthesis; pyridoxal 5'-phosphate biosynthesis.</text>
</comment>
<comment type="subunit">
    <text evidence="1 5">Homohexamer and homododecamer. In the presence of PdxT, forms a dodecamer of heterodimers.</text>
</comment>
<comment type="interaction">
    <interactant intactId="EBI-7828661">
        <id>P37527</id>
    </interactant>
    <interactant intactId="EBI-7828661">
        <id>P37527</id>
        <label>pdxS</label>
    </interactant>
    <organismsDiffer>false</organismsDiffer>
    <experiments>2</experiments>
</comment>
<comment type="interaction">
    <interactant intactId="EBI-7828661">
        <id>P37527</id>
    </interactant>
    <interactant intactId="EBI-7051766">
        <id>P37528</id>
        <label>pdxT</label>
    </interactant>
    <organismsDiffer>false</organismsDiffer>
    <experiments>5</experiments>
</comment>
<comment type="induction">
    <text>By superoxide.</text>
</comment>
<comment type="similarity">
    <text evidence="1">Belongs to the PdxS/SNZ family.</text>
</comment>
<accession>P37527</accession>
<accession>P27877</accession>
<protein>
    <recommendedName>
        <fullName evidence="1">Pyridoxal 5'-phosphate synthase subunit PdxS</fullName>
        <shortName evidence="1">PLP synthase subunit PdxS</shortName>
        <ecNumber evidence="1 4 6 7 8 9">4.3.3.6</ecNumber>
    </recommendedName>
    <alternativeName>
        <fullName evidence="1">Pdx1</fullName>
    </alternativeName>
    <alternativeName>
        <fullName>Superoxide-inducible protein 7</fullName>
        <shortName>SOI7</shortName>
    </alternativeName>
</protein>
<organism>
    <name type="scientific">Bacillus subtilis (strain 168)</name>
    <dbReference type="NCBI Taxonomy" id="224308"/>
    <lineage>
        <taxon>Bacteria</taxon>
        <taxon>Bacillati</taxon>
        <taxon>Bacillota</taxon>
        <taxon>Bacilli</taxon>
        <taxon>Bacillales</taxon>
        <taxon>Bacillaceae</taxon>
        <taxon>Bacillus</taxon>
    </lineage>
</organism>
<name>PDXS_BACSU</name>
<dbReference type="EC" id="4.3.3.6" evidence="1 4 6 7 8 9"/>
<dbReference type="EMBL" id="AL009126">
    <property type="protein sequence ID" value="CAB11787.1"/>
    <property type="molecule type" value="Genomic_DNA"/>
</dbReference>
<dbReference type="PIR" id="S66041">
    <property type="entry name" value="S66041"/>
</dbReference>
<dbReference type="RefSeq" id="NP_387892.1">
    <property type="nucleotide sequence ID" value="NC_000964.3"/>
</dbReference>
<dbReference type="RefSeq" id="WP_003247145.1">
    <property type="nucleotide sequence ID" value="NZ_OZ025638.1"/>
</dbReference>
<dbReference type="PDB" id="2NV1">
    <property type="method" value="X-ray"/>
    <property type="resolution" value="2.08 A"/>
    <property type="chains" value="A/B/C/D/E/F=1-294"/>
</dbReference>
<dbReference type="PDB" id="2NV2">
    <property type="method" value="X-ray"/>
    <property type="resolution" value="2.12 A"/>
    <property type="chains" value="A/C/E/G/I/K/M/O/Q/S/U/W=1-294"/>
</dbReference>
<dbReference type="PDBsum" id="2NV1"/>
<dbReference type="PDBsum" id="2NV2"/>
<dbReference type="SMR" id="P37527"/>
<dbReference type="DIP" id="DIP-61325N"/>
<dbReference type="FunCoup" id="P37527">
    <property type="interactions" value="381"/>
</dbReference>
<dbReference type="IntAct" id="P37527">
    <property type="interactions" value="2"/>
</dbReference>
<dbReference type="MINT" id="P37527"/>
<dbReference type="STRING" id="224308.BSU00110"/>
<dbReference type="jPOST" id="P37527"/>
<dbReference type="PaxDb" id="224308-BSU00110"/>
<dbReference type="EnsemblBacteria" id="CAB11787">
    <property type="protein sequence ID" value="CAB11787"/>
    <property type="gene ID" value="BSU_00110"/>
</dbReference>
<dbReference type="GeneID" id="86871235"/>
<dbReference type="GeneID" id="939988"/>
<dbReference type="KEGG" id="bsu:BSU00110"/>
<dbReference type="PATRIC" id="fig|224308.179.peg.11"/>
<dbReference type="eggNOG" id="COG0214">
    <property type="taxonomic scope" value="Bacteria"/>
</dbReference>
<dbReference type="InParanoid" id="P37527"/>
<dbReference type="OrthoDB" id="9772545at2"/>
<dbReference type="PhylomeDB" id="P37527"/>
<dbReference type="BioCyc" id="BSUB:BSU00110-MONOMER"/>
<dbReference type="BioCyc" id="MetaCyc:MONOMER-15502"/>
<dbReference type="BRENDA" id="4.3.3.6">
    <property type="organism ID" value="658"/>
</dbReference>
<dbReference type="SABIO-RK" id="P37527"/>
<dbReference type="UniPathway" id="UPA00245"/>
<dbReference type="EvolutionaryTrace" id="P37527"/>
<dbReference type="Proteomes" id="UP000001570">
    <property type="component" value="Chromosome"/>
</dbReference>
<dbReference type="GO" id="GO:0016843">
    <property type="term" value="F:amine-lyase activity"/>
    <property type="evidence" value="ECO:0000318"/>
    <property type="project" value="GO_Central"/>
</dbReference>
<dbReference type="GO" id="GO:0042802">
    <property type="term" value="F:identical protein binding"/>
    <property type="evidence" value="ECO:0000353"/>
    <property type="project" value="IntAct"/>
</dbReference>
<dbReference type="GO" id="GO:0036381">
    <property type="term" value="F:pyridoxal 5'-phosphate synthase (glutamine hydrolysing) activity"/>
    <property type="evidence" value="ECO:0007669"/>
    <property type="project" value="UniProtKB-UniRule"/>
</dbReference>
<dbReference type="GO" id="GO:0006520">
    <property type="term" value="P:amino acid metabolic process"/>
    <property type="evidence" value="ECO:0000318"/>
    <property type="project" value="GO_Central"/>
</dbReference>
<dbReference type="GO" id="GO:0042823">
    <property type="term" value="P:pyridoxal phosphate biosynthetic process"/>
    <property type="evidence" value="ECO:0000318"/>
    <property type="project" value="GO_Central"/>
</dbReference>
<dbReference type="GO" id="GO:0008615">
    <property type="term" value="P:pyridoxine biosynthetic process"/>
    <property type="evidence" value="ECO:0000318"/>
    <property type="project" value="GO_Central"/>
</dbReference>
<dbReference type="CDD" id="cd04727">
    <property type="entry name" value="pdxS"/>
    <property type="match status" value="1"/>
</dbReference>
<dbReference type="FunFam" id="3.20.20.70:FF:000001">
    <property type="entry name" value="Pyridoxine biosynthesis protein PDX1"/>
    <property type="match status" value="1"/>
</dbReference>
<dbReference type="Gene3D" id="3.20.20.70">
    <property type="entry name" value="Aldolase class I"/>
    <property type="match status" value="1"/>
</dbReference>
<dbReference type="HAMAP" id="MF_01824">
    <property type="entry name" value="PdxS"/>
    <property type="match status" value="1"/>
</dbReference>
<dbReference type="InterPro" id="IPR013785">
    <property type="entry name" value="Aldolase_TIM"/>
</dbReference>
<dbReference type="InterPro" id="IPR001852">
    <property type="entry name" value="PdxS/SNZ"/>
</dbReference>
<dbReference type="InterPro" id="IPR033755">
    <property type="entry name" value="PdxS/SNZ_N"/>
</dbReference>
<dbReference type="InterPro" id="IPR011060">
    <property type="entry name" value="RibuloseP-bd_barrel"/>
</dbReference>
<dbReference type="NCBIfam" id="NF003215">
    <property type="entry name" value="PRK04180.1"/>
    <property type="match status" value="1"/>
</dbReference>
<dbReference type="NCBIfam" id="TIGR00343">
    <property type="entry name" value="pyridoxal 5'-phosphate synthase lyase subunit PdxS"/>
    <property type="match status" value="1"/>
</dbReference>
<dbReference type="PANTHER" id="PTHR31829">
    <property type="entry name" value="PYRIDOXAL 5'-PHOSPHATE SYNTHASE SUBUNIT SNZ1-RELATED"/>
    <property type="match status" value="1"/>
</dbReference>
<dbReference type="PANTHER" id="PTHR31829:SF0">
    <property type="entry name" value="PYRIDOXAL 5'-PHOSPHATE SYNTHASE SUBUNIT SNZ1-RELATED"/>
    <property type="match status" value="1"/>
</dbReference>
<dbReference type="Pfam" id="PF01680">
    <property type="entry name" value="SOR_SNZ"/>
    <property type="match status" value="1"/>
</dbReference>
<dbReference type="PIRSF" id="PIRSF029271">
    <property type="entry name" value="Pdx1"/>
    <property type="match status" value="1"/>
</dbReference>
<dbReference type="SUPFAM" id="SSF51366">
    <property type="entry name" value="Ribulose-phoshate binding barrel"/>
    <property type="match status" value="1"/>
</dbReference>
<dbReference type="PROSITE" id="PS01235">
    <property type="entry name" value="PDXS_SNZ_1"/>
    <property type="match status" value="1"/>
</dbReference>
<dbReference type="PROSITE" id="PS51129">
    <property type="entry name" value="PDXS_SNZ_2"/>
    <property type="match status" value="1"/>
</dbReference>
<sequence length="294" mass="31612">MAQTGTERVKRGMAEMQKGGVIMDVINAEQAKIAEEAGAVAVMALERVPADIRAAGGVARMADPTIVEEVMNAVSIPVMAKARIGHIVEARVLEAMGVDYIDESEVLTPADEEFHLNKNEYTVPFVCGCRDLGEATRRIAEGASMLRTKGEPGTGNIVEAVRHMRKVNAQVRKVVAMSEDELMTEAKNLGAPYELLLQIKKDGKLPVVNFAAGGVATPADAALMMQLGADGVFVGSGIFKSDNPAKFAKAIVEATTHFTDYKLIAELSKELGTAMKGIEISNLLPEQRMQERGW</sequence>
<keyword id="KW-0002">3D-structure</keyword>
<keyword id="KW-0903">Direct protein sequencing</keyword>
<keyword id="KW-0456">Lyase</keyword>
<keyword id="KW-0663">Pyridoxal phosphate</keyword>
<keyword id="KW-1185">Reference proteome</keyword>
<keyword id="KW-0704">Schiff base</keyword>
<evidence type="ECO:0000255" key="1">
    <source>
        <dbReference type="HAMAP-Rule" id="MF_01824"/>
    </source>
</evidence>
<evidence type="ECO:0000269" key="2">
    <source>
    </source>
</evidence>
<evidence type="ECO:0000269" key="3">
    <source>
    </source>
</evidence>
<evidence type="ECO:0000269" key="4">
    <source>
    </source>
</evidence>
<evidence type="ECO:0000269" key="5">
    <source>
    </source>
</evidence>
<evidence type="ECO:0000269" key="6">
    <source>
    </source>
</evidence>
<evidence type="ECO:0000269" key="7">
    <source>
    </source>
</evidence>
<evidence type="ECO:0000269" key="8">
    <source>
    </source>
</evidence>
<evidence type="ECO:0000269" key="9">
    <source>
    </source>
</evidence>
<evidence type="ECO:0000269" key="10">
    <source>
    </source>
</evidence>
<evidence type="ECO:0000269" key="11">
    <source>
    </source>
</evidence>
<evidence type="ECO:0000305" key="12"/>
<evidence type="ECO:0007829" key="13">
    <source>
        <dbReference type="PDB" id="2NV1"/>
    </source>
</evidence>
<evidence type="ECO:0007829" key="14">
    <source>
        <dbReference type="PDB" id="2NV2"/>
    </source>
</evidence>
<feature type="initiator methionine" description="Removed" evidence="2 11">
    <location>
        <position position="1"/>
    </location>
</feature>
<feature type="chain" id="PRO_0000109383" description="Pyridoxal 5'-phosphate synthase subunit PdxS">
    <location>
        <begin position="2"/>
        <end position="294"/>
    </location>
</feature>
<feature type="active site" description="Schiff-base intermediate with D-ribose 5-phosphate" evidence="1 6">
    <location>
        <position position="81"/>
    </location>
</feature>
<feature type="binding site" evidence="1">
    <location>
        <position position="24"/>
    </location>
    <ligand>
        <name>D-ribose 5-phosphate</name>
        <dbReference type="ChEBI" id="CHEBI:78346"/>
    </ligand>
</feature>
<feature type="binding site" evidence="1">
    <location>
        <position position="153"/>
    </location>
    <ligand>
        <name>D-ribose 5-phosphate</name>
        <dbReference type="ChEBI" id="CHEBI:78346"/>
    </ligand>
</feature>
<feature type="binding site" evidence="1">
    <location>
        <position position="165"/>
    </location>
    <ligand>
        <name>D-glyceraldehyde 3-phosphate</name>
        <dbReference type="ChEBI" id="CHEBI:59776"/>
    </ligand>
</feature>
<feature type="binding site" evidence="1">
    <location>
        <position position="214"/>
    </location>
    <ligand>
        <name>D-ribose 5-phosphate</name>
        <dbReference type="ChEBI" id="CHEBI:78346"/>
    </ligand>
</feature>
<feature type="binding site" evidence="1">
    <location>
        <begin position="235"/>
        <end position="236"/>
    </location>
    <ligand>
        <name>D-ribose 5-phosphate</name>
        <dbReference type="ChEBI" id="CHEBI:78346"/>
    </ligand>
</feature>
<feature type="mutagenesis site" description="Almost no effect on activity." evidence="10">
    <original>K</original>
    <variation>A</variation>
    <location>
        <position position="18"/>
    </location>
</feature>
<feature type="mutagenesis site" description="Almost no effect on activity." evidence="10">
    <original>S</original>
    <variation>A</variation>
    <location>
        <position position="75"/>
    </location>
</feature>
<feature type="mutagenesis site" description="No activity, does not form covalent adduct with ribose-5-phosphate." evidence="6">
    <original>K</original>
    <variation>A</variation>
    <variation>R</variation>
    <location>
        <position position="81"/>
    </location>
</feature>
<feature type="mutagenesis site" description="Results in 20-fold reduction of activity." evidence="10">
    <original>D</original>
    <variation>A</variation>
    <location>
        <position position="99"/>
    </location>
</feature>
<feature type="mutagenesis site" description="No activity, does not form covalent adduct with ribose-5-phosphate or ribulose 5-phosphate." evidence="3 6">
    <original>K</original>
    <variation>A</variation>
    <location>
        <position position="149"/>
    </location>
</feature>
<feature type="mutagenesis site" description="No activity, but can, as the wild-type, form covalent adduct with ribose-5-phosphate." evidence="6">
    <original>K</original>
    <variation>R</variation>
    <location>
        <position position="149"/>
    </location>
</feature>
<feature type="sequence conflict" description="In Ref. 4; AA sequence." evidence="12" ref="4">
    <original>Q</original>
    <variation>D</variation>
    <location>
        <position position="30"/>
    </location>
</feature>
<feature type="strand" evidence="14">
    <location>
        <begin position="3"/>
        <end position="5"/>
    </location>
</feature>
<feature type="helix" evidence="13">
    <location>
        <begin position="7"/>
        <end position="15"/>
    </location>
</feature>
<feature type="turn" evidence="13">
    <location>
        <begin position="16"/>
        <end position="19"/>
    </location>
</feature>
<feature type="strand" evidence="13">
    <location>
        <begin position="21"/>
        <end position="27"/>
    </location>
</feature>
<feature type="helix" evidence="13">
    <location>
        <begin position="28"/>
        <end position="36"/>
    </location>
</feature>
<feature type="strand" evidence="13">
    <location>
        <begin position="40"/>
        <end position="44"/>
    </location>
</feature>
<feature type="helix" evidence="14">
    <location>
        <begin position="49"/>
        <end position="54"/>
    </location>
</feature>
<feature type="helix" evidence="13">
    <location>
        <begin position="64"/>
        <end position="73"/>
    </location>
</feature>
<feature type="strand" evidence="13">
    <location>
        <begin position="78"/>
        <end position="82"/>
    </location>
</feature>
<feature type="helix" evidence="13">
    <location>
        <begin position="87"/>
        <end position="96"/>
    </location>
</feature>
<feature type="strand" evidence="13">
    <location>
        <begin position="99"/>
        <end position="103"/>
    </location>
</feature>
<feature type="helix" evidence="13">
    <location>
        <begin position="118"/>
        <end position="120"/>
    </location>
</feature>
<feature type="strand" evidence="13">
    <location>
        <begin position="125"/>
        <end position="131"/>
    </location>
</feature>
<feature type="helix" evidence="13">
    <location>
        <begin position="132"/>
        <end position="140"/>
    </location>
</feature>
<feature type="strand" evidence="13">
    <location>
        <begin position="144"/>
        <end position="148"/>
    </location>
</feature>
<feature type="turn" evidence="14">
    <location>
        <begin position="152"/>
        <end position="154"/>
    </location>
</feature>
<feature type="helix" evidence="13">
    <location>
        <begin position="158"/>
        <end position="176"/>
    </location>
</feature>
<feature type="helix" evidence="13">
    <location>
        <begin position="179"/>
        <end position="181"/>
    </location>
</feature>
<feature type="helix" evidence="13">
    <location>
        <begin position="182"/>
        <end position="189"/>
    </location>
</feature>
<feature type="helix" evidence="13">
    <location>
        <begin position="193"/>
        <end position="202"/>
    </location>
</feature>
<feature type="strand" evidence="13">
    <location>
        <begin position="209"/>
        <end position="211"/>
    </location>
</feature>
<feature type="helix" evidence="13">
    <location>
        <begin position="218"/>
        <end position="226"/>
    </location>
</feature>
<feature type="strand" evidence="13">
    <location>
        <begin position="232"/>
        <end position="234"/>
    </location>
</feature>
<feature type="helix" evidence="13">
    <location>
        <begin position="236"/>
        <end position="240"/>
    </location>
</feature>
<feature type="helix" evidence="13">
    <location>
        <begin position="244"/>
        <end position="256"/>
    </location>
</feature>
<feature type="turn" evidence="13">
    <location>
        <begin position="257"/>
        <end position="259"/>
    </location>
</feature>
<feature type="helix" evidence="13">
    <location>
        <begin position="261"/>
        <end position="267"/>
    </location>
</feature>